<reference key="1">
    <citation type="journal article" date="2007" name="Curr. Biol.">
        <title>Reduced genome of the thioautotrophic intracellular symbiont in a deep-sea clam, Calyptogena okutanii.</title>
        <authorList>
            <person name="Kuwahara H."/>
            <person name="Yoshida T."/>
            <person name="Takaki Y."/>
            <person name="Shimamura S."/>
            <person name="Nishi S."/>
            <person name="Harada M."/>
            <person name="Matsuyama K."/>
            <person name="Takishita K."/>
            <person name="Kawato M."/>
            <person name="Uematsu K."/>
            <person name="Fujiwara Y."/>
            <person name="Sato T."/>
            <person name="Kato C."/>
            <person name="Kitagawa M."/>
            <person name="Kato I."/>
            <person name="Maruyama T."/>
        </authorList>
    </citation>
    <scope>NUCLEOTIDE SEQUENCE [LARGE SCALE GENOMIC DNA]</scope>
    <source>
        <strain>HA</strain>
    </source>
</reference>
<organism>
    <name type="scientific">Vesicomyosocius okutanii subsp. Calyptogena okutanii (strain HA)</name>
    <dbReference type="NCBI Taxonomy" id="412965"/>
    <lineage>
        <taxon>Bacteria</taxon>
        <taxon>Pseudomonadati</taxon>
        <taxon>Pseudomonadota</taxon>
        <taxon>Gammaproteobacteria</taxon>
        <taxon>Candidatus Pseudothioglobaceae</taxon>
        <taxon>Candidatus Vesicomyosocius</taxon>
    </lineage>
</organism>
<keyword id="KW-0066">ATP synthesis</keyword>
<keyword id="KW-0997">Cell inner membrane</keyword>
<keyword id="KW-1003">Cell membrane</keyword>
<keyword id="KW-0139">CF(1)</keyword>
<keyword id="KW-0375">Hydrogen ion transport</keyword>
<keyword id="KW-0406">Ion transport</keyword>
<keyword id="KW-0472">Membrane</keyword>
<keyword id="KW-1185">Reference proteome</keyword>
<keyword id="KW-0813">Transport</keyword>
<evidence type="ECO:0000255" key="1">
    <source>
        <dbReference type="HAMAP-Rule" id="MF_01416"/>
    </source>
</evidence>
<comment type="function">
    <text evidence="1">F(1)F(0) ATP synthase produces ATP from ADP in the presence of a proton or sodium gradient. F-type ATPases consist of two structural domains, F(1) containing the extramembraneous catalytic core and F(0) containing the membrane proton channel, linked together by a central stalk and a peripheral stalk. During catalysis, ATP synthesis in the catalytic domain of F(1) is coupled via a rotary mechanism of the central stalk subunits to proton translocation.</text>
</comment>
<comment type="function">
    <text evidence="1">This protein is part of the stalk that links CF(0) to CF(1). It either transmits conformational changes from CF(0) to CF(1) or is implicated in proton conduction.</text>
</comment>
<comment type="subunit">
    <text evidence="1">F-type ATPases have 2 components, F(1) - the catalytic core - and F(0) - the membrane proton channel. F(1) has five subunits: alpha(3), beta(3), gamma(1), delta(1), epsilon(1). F(0) has three main subunits: a(1), b(2) and c(10-14). The alpha and beta chains form an alternating ring which encloses part of the gamma chain. F(1) is attached to F(0) by a central stalk formed by the gamma and epsilon chains, while a peripheral stalk is formed by the delta and b chains.</text>
</comment>
<comment type="subcellular location">
    <subcellularLocation>
        <location evidence="1">Cell inner membrane</location>
        <topology evidence="1">Peripheral membrane protein</topology>
    </subcellularLocation>
</comment>
<comment type="similarity">
    <text evidence="1">Belongs to the ATPase delta chain family.</text>
</comment>
<proteinExistence type="inferred from homology"/>
<accession>A5CVI9</accession>
<name>ATPD_VESOH</name>
<sequence>MKLAVIAKPYANAIFELAQQDNSHLQWKMVLDVGAYLLLDKKMRRLIASPNILEQDKLSTIKALLMSILNRELDAHEAMFISVLLDNNRIGILPSIATLFESLINITNNIKIFTIISSYQLSKSEKEQIVSDLMNQYNKTVSIDIVVDKDLVGGVIIKDGDKVIDISIKARVDELGLRLSKTH</sequence>
<feature type="chain" id="PRO_0000371191" description="ATP synthase subunit delta">
    <location>
        <begin position="1"/>
        <end position="183"/>
    </location>
</feature>
<dbReference type="EMBL" id="AP009247">
    <property type="protein sequence ID" value="BAF62047.1"/>
    <property type="molecule type" value="Genomic_DNA"/>
</dbReference>
<dbReference type="RefSeq" id="WP_011930316.1">
    <property type="nucleotide sequence ID" value="NC_009465.1"/>
</dbReference>
<dbReference type="SMR" id="A5CVI9"/>
<dbReference type="STRING" id="412965.COSY_0948"/>
<dbReference type="KEGG" id="vok:COSY_0948"/>
<dbReference type="eggNOG" id="COG0712">
    <property type="taxonomic scope" value="Bacteria"/>
</dbReference>
<dbReference type="HOGENOM" id="CLU_085114_3_0_6"/>
<dbReference type="OrthoDB" id="9816221at2"/>
<dbReference type="Proteomes" id="UP000000247">
    <property type="component" value="Chromosome"/>
</dbReference>
<dbReference type="GO" id="GO:0005886">
    <property type="term" value="C:plasma membrane"/>
    <property type="evidence" value="ECO:0007669"/>
    <property type="project" value="UniProtKB-SubCell"/>
</dbReference>
<dbReference type="GO" id="GO:0045259">
    <property type="term" value="C:proton-transporting ATP synthase complex"/>
    <property type="evidence" value="ECO:0007669"/>
    <property type="project" value="UniProtKB-KW"/>
</dbReference>
<dbReference type="GO" id="GO:0046933">
    <property type="term" value="F:proton-transporting ATP synthase activity, rotational mechanism"/>
    <property type="evidence" value="ECO:0007669"/>
    <property type="project" value="UniProtKB-UniRule"/>
</dbReference>
<dbReference type="Gene3D" id="1.10.520.20">
    <property type="entry name" value="N-terminal domain of the delta subunit of the F1F0-ATP synthase"/>
    <property type="match status" value="1"/>
</dbReference>
<dbReference type="HAMAP" id="MF_01416">
    <property type="entry name" value="ATP_synth_delta_bact"/>
    <property type="match status" value="1"/>
</dbReference>
<dbReference type="InterPro" id="IPR026015">
    <property type="entry name" value="ATP_synth_OSCP/delta_N_sf"/>
</dbReference>
<dbReference type="InterPro" id="IPR020781">
    <property type="entry name" value="ATPase_OSCP/d_CS"/>
</dbReference>
<dbReference type="InterPro" id="IPR000711">
    <property type="entry name" value="ATPase_OSCP/dsu"/>
</dbReference>
<dbReference type="NCBIfam" id="TIGR01145">
    <property type="entry name" value="ATP_synt_delta"/>
    <property type="match status" value="1"/>
</dbReference>
<dbReference type="NCBIfam" id="NF004402">
    <property type="entry name" value="PRK05758.2-2"/>
    <property type="match status" value="1"/>
</dbReference>
<dbReference type="PANTHER" id="PTHR11910">
    <property type="entry name" value="ATP SYNTHASE DELTA CHAIN"/>
    <property type="match status" value="1"/>
</dbReference>
<dbReference type="Pfam" id="PF00213">
    <property type="entry name" value="OSCP"/>
    <property type="match status" value="1"/>
</dbReference>
<dbReference type="PRINTS" id="PR00125">
    <property type="entry name" value="ATPASEDELTA"/>
</dbReference>
<dbReference type="SUPFAM" id="SSF47928">
    <property type="entry name" value="N-terminal domain of the delta subunit of the F1F0-ATP synthase"/>
    <property type="match status" value="1"/>
</dbReference>
<dbReference type="PROSITE" id="PS00389">
    <property type="entry name" value="ATPASE_DELTA"/>
    <property type="match status" value="1"/>
</dbReference>
<gene>
    <name evidence="1" type="primary">atpH</name>
    <name type="ordered locus">COSY_0948</name>
</gene>
<protein>
    <recommendedName>
        <fullName evidence="1">ATP synthase subunit delta</fullName>
    </recommendedName>
    <alternativeName>
        <fullName evidence="1">ATP synthase F(1) sector subunit delta</fullName>
    </alternativeName>
    <alternativeName>
        <fullName evidence="1">F-type ATPase subunit delta</fullName>
        <shortName evidence="1">F-ATPase subunit delta</shortName>
    </alternativeName>
</protein>